<comment type="function">
    <text evidence="3 4">E1 ubiquitin-activating enzyme that catalyzes the first step in ubiquitin conjugation to mark cellular proteins for degradation through the ubiquitin-proteasome system (PubMed:23416107, PubMed:39143218). Activates ubiquitin by first adenylating its C-terminal glycine residue with ATP, and thereafter linking this residue to the side chain of a cysteine residue in E1, yielding a ubiquitin-E1 thioester and free AMP (PubMed:23416107, PubMed:39143218).</text>
</comment>
<comment type="catalytic activity">
    <reaction evidence="3 4">
        <text>ATP + ubiquitin + [E1 ubiquitin-activating enzyme]-L-cysteine = AMP + diphosphate + S-ubiquitinyl-[E1 ubiquitin-activating enzyme]-L-cysteine.</text>
        <dbReference type="EC" id="6.2.1.45"/>
    </reaction>
</comment>
<comment type="activity regulation">
    <text evidence="4">Ubiquitin transfer between the E1 ubiquitin-activating enzyme ptr3 and E2 ubiquitin-conjugating enzyme ubc4 is enhanced by the presence of magnesium and ATP, or adenylated ubiquitin.</text>
</comment>
<comment type="pathway">
    <text evidence="3 4">Protein modification; protein ubiquitination.</text>
</comment>
<comment type="subunit">
    <text evidence="3 4">Monomer (PubMed:23416107). Interacts with the E2 ubiquitin-conjugating enzyme ubc4 (PubMed:23416107, PubMed:39143218).</text>
</comment>
<comment type="interaction">
    <interactant intactId="EBI-15837011">
        <id>O94609</id>
    </interactant>
    <interactant intactId="EBI-15837044">
        <id>P0C014</id>
    </interactant>
    <organismsDiffer>false</organismsDiffer>
    <experiments>2</experiments>
</comment>
<comment type="subcellular location">
    <subcellularLocation>
        <location>Cytoplasm</location>
    </subcellularLocation>
    <subcellularLocation>
        <location>Nucleus</location>
    </subcellularLocation>
</comment>
<comment type="miscellaneous">
    <text evidence="4">There are two active sites within the E1 molecule, allowing it to accommodate two ubiquitin moieties at a time, with a new ubiquitin forming an adenylate intermediate as the previous one is transferred to the thiol site.</text>
</comment>
<comment type="similarity">
    <text evidence="5">Belongs to the ubiquitin-activating E1 family.</text>
</comment>
<evidence type="ECO:0000250" key="1">
    <source>
        <dbReference type="UniProtKB" id="P22515"/>
    </source>
</evidence>
<evidence type="ECO:0000255" key="2">
    <source>
        <dbReference type="PROSITE-ProRule" id="PRU10132"/>
    </source>
</evidence>
<evidence type="ECO:0000269" key="3">
    <source>
    </source>
</evidence>
<evidence type="ECO:0000269" key="4">
    <source>
    </source>
</evidence>
<evidence type="ECO:0000305" key="5"/>
<evidence type="ECO:0007744" key="6">
    <source>
        <dbReference type="PDB" id="4II2"/>
    </source>
</evidence>
<evidence type="ECO:0007744" key="7">
    <source>
        <dbReference type="PDB" id="4II3"/>
    </source>
</evidence>
<evidence type="ECO:0007744" key="8">
    <source>
        <dbReference type="PDB" id="9B5C"/>
    </source>
</evidence>
<evidence type="ECO:0007744" key="9">
    <source>
        <dbReference type="PDB" id="9B5D"/>
    </source>
</evidence>
<evidence type="ECO:0007744" key="10">
    <source>
        <dbReference type="PDB" id="9B5E"/>
    </source>
</evidence>
<evidence type="ECO:0007744" key="11">
    <source>
        <dbReference type="PDB" id="9B5F"/>
    </source>
</evidence>
<evidence type="ECO:0007744" key="12">
    <source>
        <dbReference type="PDB" id="9B5G"/>
    </source>
</evidence>
<evidence type="ECO:0007744" key="13">
    <source>
        <dbReference type="PDB" id="9B5H"/>
    </source>
</evidence>
<evidence type="ECO:0007744" key="14">
    <source>
        <dbReference type="PDB" id="9B5I"/>
    </source>
</evidence>
<evidence type="ECO:0007744" key="15">
    <source>
        <dbReference type="PDB" id="9B5J"/>
    </source>
</evidence>
<evidence type="ECO:0007744" key="16">
    <source>
        <dbReference type="PDB" id="9B5K"/>
    </source>
</evidence>
<evidence type="ECO:0007744" key="17">
    <source>
        <dbReference type="PDB" id="9B5L"/>
    </source>
</evidence>
<evidence type="ECO:0007744" key="18">
    <source>
        <dbReference type="PDB" id="9B5M"/>
    </source>
</evidence>
<evidence type="ECO:0007829" key="19">
    <source>
        <dbReference type="PDB" id="4II2"/>
    </source>
</evidence>
<evidence type="ECO:0007829" key="20">
    <source>
        <dbReference type="PDB" id="4II3"/>
    </source>
</evidence>
<evidence type="ECO:0007829" key="21">
    <source>
        <dbReference type="PDB" id="5KNL"/>
    </source>
</evidence>
<evidence type="ECO:0007829" key="22">
    <source>
        <dbReference type="PDB" id="6O82"/>
    </source>
</evidence>
<evidence type="ECO:0007829" key="23">
    <source>
        <dbReference type="PDB" id="6O83"/>
    </source>
</evidence>
<gene>
    <name type="primary">ptr3</name>
    <name type="ORF">SPBC1604.21c</name>
    <name type="ORF">SPBC211.09</name>
</gene>
<sequence length="1012" mass="112949">MSNNMNIDQTDQNTIDEGLYSRQLYVLGHEAMKQMSQSNVLIIGCKGLGVEIAKNVCLAGVKSVTLYDPQPTRIEDLSSQYFLTEDDIGVPRAKVTVSKLAELNQYVPVSVVDELSTEYLKNFKCVVVTETSLTKQLEINDFTHKNHIAYIAADSRGLFGSIFCDFGENFICTDTDGNEPLTGMIASITDDGVVTMLEETRHGLENGDFVKFTEVKGMPGLNDGTPRKVEVKGPYTFSIGSVKDLGSAGYNGVFTQVKVPTKISFKSLRESLKDPEYVYPDFGKMMRPPQYHIAFQALSAFADAHEGSLPRPRNDIDAAEFFEFCKKIASTLQFDVELDEKLIKEISYQARGDLVAMSAFLGGAVAQEVLKATTSKFYPLKQYFYFDSLESLPSSVTISEETCKPRGCRYDGQIAVFGSEFQEKIASLSTFLVGAGAIGCEMLKNWAMMGVATGESGHISVTDMDSIEKSNLNRQFLFRPRDVGKLKSECASTAVSIMNPSLTGKITSYQERVGPESEGIFGDEFFEKLSLVTNALDNVEARMYVDRRCVFFEKPLLESGTLGTKGNTQVVVPHLTESYGSSQDPPEKSFPICTLKNFPNRIEHTIAWARDLFEGLFKQPIDNVNMYLSSPNFLETSLKTSSNPREVLENIRDYLVTEKPLSFEECIMWARLQFDKFFNNNIQQLLFNFPKDSVTSTGQPFWSGPKRAPTPLSFDIHNREHFDFIVAAASLYAFNYGLKSETDPAIYERVLAGYNPPPFAPKSGIKIQVNENEEAPETAANKDKQELKSIADSLPPPSSLVGFRLTPAEFEKDDDSNHHIDFITAASNLRAMNYDITPADRFKTKFVAGKIVPAMCTSTAVVSGLVCLELVKLVDGKKKIEEYKNGFFNLAIGLFTFSDPIASPKMKVNGKEIDKIWDRYNLPDCTLQELIDYFQKEEGLEVTMLSSGVSLLYANFQPPKKLAERLPLKISELVEQITKKKLEPFRKHLVLEICCDDANGEDVEVPFICIKL</sequence>
<accession>O94609</accession>
<accession>Q9P7R2</accession>
<accession>Q9USY9</accession>
<organism>
    <name type="scientific">Schizosaccharomyces pombe (strain 972 / ATCC 24843)</name>
    <name type="common">Fission yeast</name>
    <dbReference type="NCBI Taxonomy" id="284812"/>
    <lineage>
        <taxon>Eukaryota</taxon>
        <taxon>Fungi</taxon>
        <taxon>Dikarya</taxon>
        <taxon>Ascomycota</taxon>
        <taxon>Taphrinomycotina</taxon>
        <taxon>Schizosaccharomycetes</taxon>
        <taxon>Schizosaccharomycetales</taxon>
        <taxon>Schizosaccharomycetaceae</taxon>
        <taxon>Schizosaccharomyces</taxon>
    </lineage>
</organism>
<proteinExistence type="evidence at protein level"/>
<reference key="1">
    <citation type="journal article" date="1997" name="Mol. Biol. Cell">
        <title>Isolation and molecular characterization of mRNA transport mutants in Schizosaccharomyces pombe.</title>
        <authorList>
            <person name="Azad A.K."/>
            <person name="Tani T."/>
            <person name="Shiki N."/>
            <person name="Tsuneyoshi S."/>
            <person name="Urushiyama S."/>
            <person name="Ohshima Y."/>
        </authorList>
    </citation>
    <scope>NUCLEOTIDE SEQUENCE [GENOMIC DNA]</scope>
    <scope>CHARACTERIZATION</scope>
</reference>
<reference key="2">
    <citation type="journal article" date="2002" name="Nature">
        <title>The genome sequence of Schizosaccharomyces pombe.</title>
        <authorList>
            <person name="Wood V."/>
            <person name="Gwilliam R."/>
            <person name="Rajandream M.A."/>
            <person name="Lyne M.H."/>
            <person name="Lyne R."/>
            <person name="Stewart A."/>
            <person name="Sgouros J.G."/>
            <person name="Peat N."/>
            <person name="Hayles J."/>
            <person name="Baker S.G."/>
            <person name="Basham D."/>
            <person name="Bowman S."/>
            <person name="Brooks K."/>
            <person name="Brown D."/>
            <person name="Brown S."/>
            <person name="Chillingworth T."/>
            <person name="Churcher C.M."/>
            <person name="Collins M."/>
            <person name="Connor R."/>
            <person name="Cronin A."/>
            <person name="Davis P."/>
            <person name="Feltwell T."/>
            <person name="Fraser A."/>
            <person name="Gentles S."/>
            <person name="Goble A."/>
            <person name="Hamlin N."/>
            <person name="Harris D.E."/>
            <person name="Hidalgo J."/>
            <person name="Hodgson G."/>
            <person name="Holroyd S."/>
            <person name="Hornsby T."/>
            <person name="Howarth S."/>
            <person name="Huckle E.J."/>
            <person name="Hunt S."/>
            <person name="Jagels K."/>
            <person name="James K.D."/>
            <person name="Jones L."/>
            <person name="Jones M."/>
            <person name="Leather S."/>
            <person name="McDonald S."/>
            <person name="McLean J."/>
            <person name="Mooney P."/>
            <person name="Moule S."/>
            <person name="Mungall K.L."/>
            <person name="Murphy L.D."/>
            <person name="Niblett D."/>
            <person name="Odell C."/>
            <person name="Oliver K."/>
            <person name="O'Neil S."/>
            <person name="Pearson D."/>
            <person name="Quail M.A."/>
            <person name="Rabbinowitsch E."/>
            <person name="Rutherford K.M."/>
            <person name="Rutter S."/>
            <person name="Saunders D."/>
            <person name="Seeger K."/>
            <person name="Sharp S."/>
            <person name="Skelton J."/>
            <person name="Simmonds M.N."/>
            <person name="Squares R."/>
            <person name="Squares S."/>
            <person name="Stevens K."/>
            <person name="Taylor K."/>
            <person name="Taylor R.G."/>
            <person name="Tivey A."/>
            <person name="Walsh S.V."/>
            <person name="Warren T."/>
            <person name="Whitehead S."/>
            <person name="Woodward J.R."/>
            <person name="Volckaert G."/>
            <person name="Aert R."/>
            <person name="Robben J."/>
            <person name="Grymonprez B."/>
            <person name="Weltjens I."/>
            <person name="Vanstreels E."/>
            <person name="Rieger M."/>
            <person name="Schaefer M."/>
            <person name="Mueller-Auer S."/>
            <person name="Gabel C."/>
            <person name="Fuchs M."/>
            <person name="Duesterhoeft A."/>
            <person name="Fritzc C."/>
            <person name="Holzer E."/>
            <person name="Moestl D."/>
            <person name="Hilbert H."/>
            <person name="Borzym K."/>
            <person name="Langer I."/>
            <person name="Beck A."/>
            <person name="Lehrach H."/>
            <person name="Reinhardt R."/>
            <person name="Pohl T.M."/>
            <person name="Eger P."/>
            <person name="Zimmermann W."/>
            <person name="Wedler H."/>
            <person name="Wambutt R."/>
            <person name="Purnelle B."/>
            <person name="Goffeau A."/>
            <person name="Cadieu E."/>
            <person name="Dreano S."/>
            <person name="Gloux S."/>
            <person name="Lelaure V."/>
            <person name="Mottier S."/>
            <person name="Galibert F."/>
            <person name="Aves S.J."/>
            <person name="Xiang Z."/>
            <person name="Hunt C."/>
            <person name="Moore K."/>
            <person name="Hurst S.M."/>
            <person name="Lucas M."/>
            <person name="Rochet M."/>
            <person name="Gaillardin C."/>
            <person name="Tallada V.A."/>
            <person name="Garzon A."/>
            <person name="Thode G."/>
            <person name="Daga R.R."/>
            <person name="Cruzado L."/>
            <person name="Jimenez J."/>
            <person name="Sanchez M."/>
            <person name="del Rey F."/>
            <person name="Benito J."/>
            <person name="Dominguez A."/>
            <person name="Revuelta J.L."/>
            <person name="Moreno S."/>
            <person name="Armstrong J."/>
            <person name="Forsburg S.L."/>
            <person name="Cerutti L."/>
            <person name="Lowe T."/>
            <person name="McCombie W.R."/>
            <person name="Paulsen I."/>
            <person name="Potashkin J."/>
            <person name="Shpakovski G.V."/>
            <person name="Ussery D."/>
            <person name="Barrell B.G."/>
            <person name="Nurse P."/>
        </authorList>
    </citation>
    <scope>NUCLEOTIDE SEQUENCE [LARGE SCALE GENOMIC DNA]</scope>
    <source>
        <strain>972 / ATCC 24843</strain>
    </source>
</reference>
<reference evidence="6 7" key="3">
    <citation type="journal article" date="2013" name="Mol. Cell">
        <title>Structure of a ubiquitin E1-E2 complex: insights to E1-E2 thioester transfer.</title>
        <authorList>
            <person name="Olsen S.K."/>
            <person name="Lima C.D."/>
        </authorList>
    </citation>
    <scope>X-RAY CRYSTALLOGRAPHY (2.20 ANGSTROMS) OF 13-1012 IN COMPLEX WITH ATP; UBIQUITIN AND UBC4</scope>
    <scope>FUNCTION</scope>
    <scope>CATALYTIC ACTIVITY</scope>
    <scope>PATHWAY</scope>
    <scope>SUBUNIT</scope>
    <scope>MUTAGENESIS OF ILE-592; PHE-598; PHE-689 AND PHE-701</scope>
</reference>
<reference evidence="8 9 10 11 12 13 14 15 16 17 18" key="4">
    <citation type="journal article" date="2024" name="Nature">
        <title>Structural basis for transthiolation intermediates in the ubiquitin pathway.</title>
        <authorList>
            <person name="Kochanczyk T."/>
            <person name="Hann Z.S."/>
            <person name="Lux M.C."/>
            <person name="Delos Reyes A.M.V."/>
            <person name="Ji C."/>
            <person name="Tan D.S."/>
            <person name="Lima C.D."/>
        </authorList>
    </citation>
    <scope>STRUCTURE BY ELECTRON MICROSCOPY (2.50 ANGSTROMS) OF 13-1012 IN COMPLEXES WITH MG; AMP; UBC4; UEP1 AND UBI4</scope>
    <scope>FUNCTION</scope>
    <scope>CATALYTIC ACTIVITY</scope>
    <scope>ACTIVITY REGULATION</scope>
    <scope>PATHWAY</scope>
    <scope>INTERACTION WITH UBC4</scope>
</reference>
<keyword id="KW-0002">3D-structure</keyword>
<keyword id="KW-0067">ATP-binding</keyword>
<keyword id="KW-0963">Cytoplasm</keyword>
<keyword id="KW-1017">Isopeptide bond</keyword>
<keyword id="KW-0436">Ligase</keyword>
<keyword id="KW-0460">Magnesium</keyword>
<keyword id="KW-0479">Metal-binding</keyword>
<keyword id="KW-0547">Nucleotide-binding</keyword>
<keyword id="KW-0539">Nucleus</keyword>
<keyword id="KW-0597">Phosphoprotein</keyword>
<keyword id="KW-1185">Reference proteome</keyword>
<keyword id="KW-0832">Ubl conjugation</keyword>
<keyword id="KW-0833">Ubl conjugation pathway</keyword>
<feature type="chain" id="PRO_0000194976" description="Ubiquitin-activating enzyme E1 1">
    <location>
        <begin position="1"/>
        <end position="1012"/>
    </location>
</feature>
<feature type="active site" description="Glycyl thioester intermediate" evidence="2">
    <location>
        <position position="593"/>
    </location>
</feature>
<feature type="binding site" evidence="3 6 7">
    <location>
        <position position="22"/>
    </location>
    <ligand>
        <name>ATP</name>
        <dbReference type="ChEBI" id="CHEBI:30616"/>
    </ligand>
</feature>
<feature type="binding site" evidence="3 6 7">
    <location>
        <position position="437"/>
    </location>
    <ligand>
        <name>ATP</name>
        <dbReference type="ChEBI" id="CHEBI:30616"/>
    </ligand>
</feature>
<feature type="binding site" evidence="3 6 7">
    <location>
        <position position="463"/>
    </location>
    <ligand>
        <name>ATP</name>
        <dbReference type="ChEBI" id="CHEBI:30616"/>
    </ligand>
</feature>
<feature type="binding site" evidence="1">
    <location>
        <position position="465"/>
    </location>
    <ligand>
        <name>Mg(2+)</name>
        <dbReference type="ChEBI" id="CHEBI:18420"/>
        <label>1</label>
    </ligand>
</feature>
<feature type="binding site" evidence="1">
    <location>
        <position position="468"/>
    </location>
    <ligand>
        <name>Mg(2+)</name>
        <dbReference type="ChEBI" id="CHEBI:18420"/>
        <label>1</label>
    </ligand>
</feature>
<feature type="binding site" evidence="1">
    <location>
        <position position="471"/>
    </location>
    <ligand>
        <name>ATP</name>
        <dbReference type="ChEBI" id="CHEBI:30616"/>
    </ligand>
</feature>
<feature type="binding site" evidence="3 6">
    <location>
        <position position="474"/>
    </location>
    <ligand>
        <name>ATP</name>
        <dbReference type="ChEBI" id="CHEBI:30616"/>
    </ligand>
</feature>
<feature type="binding site" evidence="3 6 7">
    <location>
        <position position="487"/>
    </location>
    <ligand>
        <name>ATP</name>
        <dbReference type="ChEBI" id="CHEBI:30616"/>
    </ligand>
</feature>
<feature type="binding site" evidence="3 6 7">
    <location>
        <position position="513"/>
    </location>
    <ligand>
        <name>ATP</name>
        <dbReference type="ChEBI" id="CHEBI:30616"/>
    </ligand>
</feature>
<feature type="binding site" evidence="3 6 7">
    <location>
        <position position="537"/>
    </location>
    <ligand>
        <name>ATP</name>
        <dbReference type="ChEBI" id="CHEBI:30616"/>
    </ligand>
</feature>
<feature type="binding site" evidence="1">
    <location>
        <position position="537"/>
    </location>
    <ligand>
        <name>Mg(2+)</name>
        <dbReference type="ChEBI" id="CHEBI:18420"/>
        <label>2</label>
    </ligand>
</feature>
<feature type="binding site" evidence="3 6 7">
    <location>
        <position position="538"/>
    </location>
    <ligand>
        <name>ATP</name>
        <dbReference type="ChEBI" id="CHEBI:30616"/>
    </ligand>
</feature>
<feature type="modified residue" description="Phosphoserine" evidence="1">
    <location>
        <position position="264"/>
    </location>
</feature>
<feature type="modified residue" description="Phosphoserine" evidence="1">
    <location>
        <position position="903"/>
    </location>
</feature>
<feature type="cross-link" description="Glycyl lysine isopeptide (Lys-Gly) (interchain with G-Cter in ubiquitin)" evidence="1">
    <location>
        <position position="588"/>
    </location>
</feature>
<feature type="mutagenesis site" description="Strongly reduces enzyme activity." evidence="3">
    <original>I</original>
    <variation>G</variation>
    <location>
        <position position="592"/>
    </location>
</feature>
<feature type="mutagenesis site" description="Nearly abolishes enzyme activity; when associated with A-701." evidence="3">
    <original>F</original>
    <variation>A</variation>
    <location>
        <position position="598"/>
    </location>
</feature>
<feature type="mutagenesis site" description="Abolishes enzyme activity; when associated with A-701." evidence="3">
    <original>F</original>
    <variation>A</variation>
    <location>
        <position position="689"/>
    </location>
</feature>
<feature type="mutagenesis site" description="Nearly abolishes enzyme activity; when associated with A-598. Abolishes enzyme activity; when associated with A-689." evidence="3">
    <original>F</original>
    <variation>A</variation>
    <location>
        <position position="701"/>
    </location>
</feature>
<feature type="helix" evidence="19">
    <location>
        <begin position="17"/>
        <end position="27"/>
    </location>
</feature>
<feature type="helix" evidence="19">
    <location>
        <begin position="29"/>
        <end position="36"/>
    </location>
</feature>
<feature type="strand" evidence="19">
    <location>
        <begin position="39"/>
        <end position="43"/>
    </location>
</feature>
<feature type="helix" evidence="19">
    <location>
        <begin position="47"/>
        <end position="59"/>
    </location>
</feature>
<feature type="strand" evidence="19">
    <location>
        <begin position="62"/>
        <end position="67"/>
    </location>
</feature>
<feature type="helix" evidence="19">
    <location>
        <begin position="74"/>
        <end position="78"/>
    </location>
</feature>
<feature type="helix" evidence="19">
    <location>
        <begin position="85"/>
        <end position="87"/>
    </location>
</feature>
<feature type="helix" evidence="19">
    <location>
        <begin position="92"/>
        <end position="101"/>
    </location>
</feature>
<feature type="strand" evidence="23">
    <location>
        <begin position="105"/>
        <end position="107"/>
    </location>
</feature>
<feature type="strand" evidence="19">
    <location>
        <begin position="109"/>
        <end position="111"/>
    </location>
</feature>
<feature type="helix" evidence="19">
    <location>
        <begin position="118"/>
        <end position="122"/>
    </location>
</feature>
<feature type="strand" evidence="19">
    <location>
        <begin position="124"/>
        <end position="128"/>
    </location>
</feature>
<feature type="helix" evidence="19">
    <location>
        <begin position="133"/>
        <end position="145"/>
    </location>
</feature>
<feature type="strand" evidence="19">
    <location>
        <begin position="149"/>
        <end position="156"/>
    </location>
</feature>
<feature type="strand" evidence="19">
    <location>
        <begin position="159"/>
        <end position="165"/>
    </location>
</feature>
<feature type="strand" evidence="19">
    <location>
        <begin position="170"/>
        <end position="176"/>
    </location>
</feature>
<feature type="strand" evidence="19">
    <location>
        <begin position="182"/>
        <end position="189"/>
    </location>
</feature>
<feature type="strand" evidence="19">
    <location>
        <begin position="193"/>
        <end position="197"/>
    </location>
</feature>
<feature type="strand" evidence="19">
    <location>
        <begin position="209"/>
        <end position="214"/>
    </location>
</feature>
<feature type="helix" evidence="19">
    <location>
        <begin position="221"/>
        <end position="223"/>
    </location>
</feature>
<feature type="strand" evidence="19">
    <location>
        <begin position="233"/>
        <end position="238"/>
    </location>
</feature>
<feature type="helix" evidence="22">
    <location>
        <begin position="243"/>
        <end position="245"/>
    </location>
</feature>
<feature type="strand" evidence="19">
    <location>
        <begin position="247"/>
        <end position="251"/>
    </location>
</feature>
<feature type="strand" evidence="19">
    <location>
        <begin position="253"/>
        <end position="257"/>
    </location>
</feature>
<feature type="strand" evidence="19">
    <location>
        <begin position="261"/>
        <end position="263"/>
    </location>
</feature>
<feature type="helix" evidence="19">
    <location>
        <begin position="268"/>
        <end position="271"/>
    </location>
</feature>
<feature type="strand" evidence="19">
    <location>
        <begin position="272"/>
        <end position="274"/>
    </location>
</feature>
<feature type="helix" evidence="19">
    <location>
        <begin position="282"/>
        <end position="284"/>
    </location>
</feature>
<feature type="helix" evidence="19">
    <location>
        <begin position="287"/>
        <end position="304"/>
    </location>
</feature>
<feature type="turn" evidence="19">
    <location>
        <begin position="305"/>
        <end position="307"/>
    </location>
</feature>
<feature type="helix" evidence="19">
    <location>
        <begin position="315"/>
        <end position="331"/>
    </location>
</feature>
<feature type="helix" evidence="19">
    <location>
        <begin position="340"/>
        <end position="348"/>
    </location>
</feature>
<feature type="turn" evidence="19">
    <location>
        <begin position="349"/>
        <end position="351"/>
    </location>
</feature>
<feature type="helix" evidence="19">
    <location>
        <begin position="355"/>
        <end position="372"/>
    </location>
</feature>
<feature type="strand" evidence="19">
    <location>
        <begin position="382"/>
        <end position="387"/>
    </location>
</feature>
<feature type="helix" evidence="19">
    <location>
        <begin position="389"/>
        <end position="391"/>
    </location>
</feature>
<feature type="strand" evidence="19">
    <location>
        <begin position="394"/>
        <end position="396"/>
    </location>
</feature>
<feature type="helix" evidence="19">
    <location>
        <begin position="400"/>
        <end position="403"/>
    </location>
</feature>
<feature type="helix" evidence="19">
    <location>
        <begin position="411"/>
        <end position="417"/>
    </location>
</feature>
<feature type="helix" evidence="19">
    <location>
        <begin position="419"/>
        <end position="426"/>
    </location>
</feature>
<feature type="strand" evidence="19">
    <location>
        <begin position="429"/>
        <end position="433"/>
    </location>
</feature>
<feature type="helix" evidence="19">
    <location>
        <begin position="437"/>
        <end position="449"/>
    </location>
</feature>
<feature type="turn" evidence="19">
    <location>
        <begin position="450"/>
        <end position="452"/>
    </location>
</feature>
<feature type="strand" evidence="20">
    <location>
        <begin position="454"/>
        <end position="456"/>
    </location>
</feature>
<feature type="strand" evidence="19">
    <location>
        <begin position="458"/>
        <end position="462"/>
    </location>
</feature>
<feature type="helix" evidence="19">
    <location>
        <begin position="469"/>
        <end position="471"/>
    </location>
</feature>
<feature type="turn" evidence="19">
    <location>
        <begin position="472"/>
        <end position="474"/>
    </location>
</feature>
<feature type="helix" evidence="19">
    <location>
        <begin position="480"/>
        <end position="482"/>
    </location>
</feature>
<feature type="helix" evidence="19">
    <location>
        <begin position="487"/>
        <end position="498"/>
    </location>
</feature>
<feature type="helix" evidence="19">
    <location>
        <begin position="500"/>
        <end position="502"/>
    </location>
</feature>
<feature type="strand" evidence="19">
    <location>
        <begin position="505"/>
        <end position="509"/>
    </location>
</feature>
<feature type="helix" evidence="19">
    <location>
        <begin position="515"/>
        <end position="517"/>
    </location>
</feature>
<feature type="turn" evidence="19">
    <location>
        <begin position="518"/>
        <end position="520"/>
    </location>
</feature>
<feature type="helix" evidence="19">
    <location>
        <begin position="523"/>
        <end position="527"/>
    </location>
</feature>
<feature type="strand" evidence="19">
    <location>
        <begin position="530"/>
        <end position="534"/>
    </location>
</feature>
<feature type="helix" evidence="19">
    <location>
        <begin position="539"/>
        <end position="552"/>
    </location>
</feature>
<feature type="strand" evidence="19">
    <location>
        <begin position="556"/>
        <end position="562"/>
    </location>
</feature>
<feature type="strand" evidence="19">
    <location>
        <begin position="565"/>
        <end position="571"/>
    </location>
</feature>
<feature type="turn" evidence="19">
    <location>
        <begin position="573"/>
        <end position="575"/>
    </location>
</feature>
<feature type="helix" evidence="19">
    <location>
        <begin position="579"/>
        <end position="581"/>
    </location>
</feature>
<feature type="helix" evidence="19">
    <location>
        <begin position="592"/>
        <end position="597"/>
    </location>
</feature>
<feature type="helix" evidence="19">
    <location>
        <begin position="602"/>
        <end position="617"/>
    </location>
</feature>
<feature type="helix" evidence="19">
    <location>
        <begin position="619"/>
        <end position="627"/>
    </location>
</feature>
<feature type="helix" evidence="19">
    <location>
        <begin position="633"/>
        <end position="637"/>
    </location>
</feature>
<feature type="turn" evidence="19">
    <location>
        <begin position="638"/>
        <end position="640"/>
    </location>
</feature>
<feature type="helix" evidence="19">
    <location>
        <begin position="644"/>
        <end position="655"/>
    </location>
</feature>
<feature type="turn" evidence="19">
    <location>
        <begin position="656"/>
        <end position="658"/>
    </location>
</feature>
<feature type="helix" evidence="19">
    <location>
        <begin position="663"/>
        <end position="678"/>
    </location>
</feature>
<feature type="helix" evidence="19">
    <location>
        <begin position="680"/>
        <end position="688"/>
    </location>
</feature>
<feature type="strand" evidence="19">
    <location>
        <begin position="698"/>
        <end position="702"/>
    </location>
</feature>
<feature type="strand" evidence="23">
    <location>
        <begin position="704"/>
        <end position="706"/>
    </location>
</feature>
<feature type="helix" evidence="19">
    <location>
        <begin position="719"/>
        <end position="735"/>
    </location>
</feature>
<feature type="helix" evidence="19">
    <location>
        <begin position="744"/>
        <end position="752"/>
    </location>
</feature>
<feature type="turn" evidence="20">
    <location>
        <begin position="780"/>
        <end position="782"/>
    </location>
</feature>
<feature type="helix" evidence="19">
    <location>
        <begin position="788"/>
        <end position="792"/>
    </location>
</feature>
<feature type="helix" evidence="19">
    <location>
        <begin position="797"/>
        <end position="799"/>
    </location>
</feature>
<feature type="strand" evidence="23">
    <location>
        <begin position="815"/>
        <end position="818"/>
    </location>
</feature>
<feature type="helix" evidence="19">
    <location>
        <begin position="819"/>
        <end position="833"/>
    </location>
</feature>
<feature type="helix" evidence="19">
    <location>
        <begin position="841"/>
        <end position="848"/>
    </location>
</feature>
<feature type="strand" evidence="23">
    <location>
        <begin position="851"/>
        <end position="853"/>
    </location>
</feature>
<feature type="helix" evidence="19">
    <location>
        <begin position="856"/>
        <end position="874"/>
    </location>
</feature>
<feature type="helix" evidence="19">
    <location>
        <begin position="880"/>
        <end position="882"/>
    </location>
</feature>
<feature type="strand" evidence="19">
    <location>
        <begin position="885"/>
        <end position="889"/>
    </location>
</feature>
<feature type="helix" evidence="19">
    <location>
        <begin position="890"/>
        <end position="892"/>
    </location>
</feature>
<feature type="strand" evidence="19">
    <location>
        <begin position="894"/>
        <end position="898"/>
    </location>
</feature>
<feature type="strand" evidence="19">
    <location>
        <begin position="905"/>
        <end position="908"/>
    </location>
</feature>
<feature type="strand" evidence="19">
    <location>
        <begin position="911"/>
        <end position="914"/>
    </location>
</feature>
<feature type="turn" evidence="19">
    <location>
        <begin position="915"/>
        <end position="917"/>
    </location>
</feature>
<feature type="strand" evidence="19">
    <location>
        <begin position="919"/>
        <end position="924"/>
    </location>
</feature>
<feature type="helix" evidence="19">
    <location>
        <begin position="927"/>
        <end position="936"/>
    </location>
</feature>
<feature type="strand" evidence="19">
    <location>
        <begin position="941"/>
        <end position="947"/>
    </location>
</feature>
<feature type="strand" evidence="19">
    <location>
        <begin position="950"/>
        <end position="954"/>
    </location>
</feature>
<feature type="helix" evidence="19">
    <location>
        <begin position="959"/>
        <end position="963"/>
    </location>
</feature>
<feature type="turn" evidence="19">
    <location>
        <begin position="964"/>
        <end position="967"/>
    </location>
</feature>
<feature type="helix" evidence="19">
    <location>
        <begin position="970"/>
        <end position="977"/>
    </location>
</feature>
<feature type="strand" evidence="19">
    <location>
        <begin position="988"/>
        <end position="996"/>
    </location>
</feature>
<feature type="strand" evidence="21">
    <location>
        <begin position="1000"/>
        <end position="1004"/>
    </location>
</feature>
<feature type="strand" evidence="19">
    <location>
        <begin position="1007"/>
        <end position="1011"/>
    </location>
</feature>
<protein>
    <recommendedName>
        <fullName>Ubiquitin-activating enzyme E1 1</fullName>
        <ecNumber evidence="3 4">6.2.1.45</ecNumber>
    </recommendedName>
    <alternativeName>
        <fullName>Poly(A)+ RNA transport protein 3</fullName>
    </alternativeName>
</protein>
<name>UBA1_SCHPO</name>
<dbReference type="EC" id="6.2.1.45" evidence="3 4"/>
<dbReference type="EMBL" id="D87259">
    <property type="protein sequence ID" value="BAA75198.1"/>
    <property type="molecule type" value="Genomic_DNA"/>
</dbReference>
<dbReference type="EMBL" id="CU329671">
    <property type="protein sequence ID" value="CAA22354.2"/>
    <property type="molecule type" value="Genomic_DNA"/>
</dbReference>
<dbReference type="PIR" id="T50344">
    <property type="entry name" value="T50344"/>
</dbReference>
<dbReference type="PIR" id="T52000">
    <property type="entry name" value="T52000"/>
</dbReference>
<dbReference type="RefSeq" id="XP_001713148.1">
    <property type="nucleotide sequence ID" value="XM_001713096.2"/>
</dbReference>
<dbReference type="PDB" id="4II2">
    <property type="method" value="X-ray"/>
    <property type="resolution" value="2.20 A"/>
    <property type="chains" value="A=13-1012"/>
</dbReference>
<dbReference type="PDB" id="4II3">
    <property type="method" value="X-ray"/>
    <property type="resolution" value="2.90 A"/>
    <property type="chains" value="A/C=13-1012"/>
</dbReference>
<dbReference type="PDB" id="5KNL">
    <property type="method" value="X-ray"/>
    <property type="resolution" value="2.50 A"/>
    <property type="chains" value="A/D=13-1012"/>
</dbReference>
<dbReference type="PDB" id="5UM6">
    <property type="method" value="X-ray"/>
    <property type="resolution" value="2.79 A"/>
    <property type="chains" value="A=13-1012"/>
</dbReference>
<dbReference type="PDB" id="6O82">
    <property type="method" value="X-ray"/>
    <property type="resolution" value="2.60 A"/>
    <property type="chains" value="A/C=13-1012"/>
</dbReference>
<dbReference type="PDB" id="6O83">
    <property type="method" value="X-ray"/>
    <property type="resolution" value="3.15 A"/>
    <property type="chains" value="A/C=13-1012"/>
</dbReference>
<dbReference type="PDB" id="9B5C">
    <property type="method" value="EM"/>
    <property type="resolution" value="2.50 A"/>
    <property type="chains" value="A=13-1012"/>
</dbReference>
<dbReference type="PDB" id="9B5D">
    <property type="method" value="EM"/>
    <property type="resolution" value="2.80 A"/>
    <property type="chains" value="A=13-1012"/>
</dbReference>
<dbReference type="PDB" id="9B5E">
    <property type="method" value="EM"/>
    <property type="resolution" value="2.81 A"/>
    <property type="chains" value="A=13-1012"/>
</dbReference>
<dbReference type="PDB" id="9B5F">
    <property type="method" value="EM"/>
    <property type="resolution" value="2.78 A"/>
    <property type="chains" value="A=13-1012"/>
</dbReference>
<dbReference type="PDB" id="9B5G">
    <property type="method" value="EM"/>
    <property type="resolution" value="2.67 A"/>
    <property type="chains" value="A=13-1012"/>
</dbReference>
<dbReference type="PDB" id="9B5H">
    <property type="method" value="EM"/>
    <property type="resolution" value="2.69 A"/>
    <property type="chains" value="A=13-1012"/>
</dbReference>
<dbReference type="PDB" id="9B5I">
    <property type="method" value="EM"/>
    <property type="resolution" value="2.70 A"/>
    <property type="chains" value="A=13-1012"/>
</dbReference>
<dbReference type="PDB" id="9B5J">
    <property type="method" value="EM"/>
    <property type="resolution" value="2.86 A"/>
    <property type="chains" value="A=13-1012"/>
</dbReference>
<dbReference type="PDB" id="9B5K">
    <property type="method" value="EM"/>
    <property type="resolution" value="3.16 A"/>
    <property type="chains" value="A=13-1012"/>
</dbReference>
<dbReference type="PDB" id="9B5L">
    <property type="method" value="EM"/>
    <property type="resolution" value="3.30 A"/>
    <property type="chains" value="A=13-1012"/>
</dbReference>
<dbReference type="PDB" id="9B5M">
    <property type="method" value="EM"/>
    <property type="resolution" value="2.79 A"/>
    <property type="chains" value="A=13-1012"/>
</dbReference>
<dbReference type="PDB" id="9B5N">
    <property type="method" value="EM"/>
    <property type="resolution" value="3.12 A"/>
    <property type="chains" value="A=13-1012"/>
</dbReference>
<dbReference type="PDB" id="9B5O">
    <property type="method" value="EM"/>
    <property type="resolution" value="3.19 A"/>
    <property type="chains" value="A=13-1012"/>
</dbReference>
<dbReference type="PDB" id="9B5P">
    <property type="method" value="EM"/>
    <property type="resolution" value="3.08 A"/>
    <property type="chains" value="A=13-1012"/>
</dbReference>
<dbReference type="PDB" id="9B5Q">
    <property type="method" value="EM"/>
    <property type="resolution" value="2.95 A"/>
    <property type="chains" value="A=13-1012"/>
</dbReference>
<dbReference type="PDB" id="9B5R">
    <property type="method" value="EM"/>
    <property type="resolution" value="2.95 A"/>
    <property type="chains" value="A=13-1012"/>
</dbReference>
<dbReference type="PDB" id="9B5S">
    <property type="method" value="EM"/>
    <property type="resolution" value="2.96 A"/>
    <property type="chains" value="A=13-1012"/>
</dbReference>
<dbReference type="PDB" id="9B5T">
    <property type="method" value="EM"/>
    <property type="resolution" value="3.16 A"/>
    <property type="chains" value="A=13-1012"/>
</dbReference>
<dbReference type="PDB" id="9B5U">
    <property type="method" value="EM"/>
    <property type="resolution" value="3.67 A"/>
    <property type="chains" value="A=13-1012"/>
</dbReference>
<dbReference type="PDB" id="9B5V">
    <property type="method" value="EM"/>
    <property type="resolution" value="3.94 A"/>
    <property type="chains" value="A=13-1012"/>
</dbReference>
<dbReference type="PDB" id="9B5W">
    <property type="method" value="EM"/>
    <property type="resolution" value="3.96 A"/>
    <property type="chains" value="A=13-1012"/>
</dbReference>
<dbReference type="PDB" id="9B5X">
    <property type="method" value="EM"/>
    <property type="resolution" value="4.16 A"/>
    <property type="chains" value="A=13-1012"/>
</dbReference>
<dbReference type="PDBsum" id="4II2"/>
<dbReference type="PDBsum" id="4II3"/>
<dbReference type="PDBsum" id="5KNL"/>
<dbReference type="PDBsum" id="5UM6"/>
<dbReference type="PDBsum" id="6O82"/>
<dbReference type="PDBsum" id="6O83"/>
<dbReference type="PDBsum" id="9B5C"/>
<dbReference type="PDBsum" id="9B5D"/>
<dbReference type="PDBsum" id="9B5E"/>
<dbReference type="PDBsum" id="9B5F"/>
<dbReference type="PDBsum" id="9B5G"/>
<dbReference type="PDBsum" id="9B5H"/>
<dbReference type="PDBsum" id="9B5I"/>
<dbReference type="PDBsum" id="9B5J"/>
<dbReference type="PDBsum" id="9B5K"/>
<dbReference type="PDBsum" id="9B5L"/>
<dbReference type="PDBsum" id="9B5M"/>
<dbReference type="PDBsum" id="9B5N"/>
<dbReference type="PDBsum" id="9B5O"/>
<dbReference type="PDBsum" id="9B5P"/>
<dbReference type="PDBsum" id="9B5Q"/>
<dbReference type="PDBsum" id="9B5R"/>
<dbReference type="PDBsum" id="9B5S"/>
<dbReference type="PDBsum" id="9B5T"/>
<dbReference type="PDBsum" id="9B5U"/>
<dbReference type="PDBsum" id="9B5V"/>
<dbReference type="PDBsum" id="9B5W"/>
<dbReference type="PDBsum" id="9B5X"/>
<dbReference type="EMDB" id="EMD-44207"/>
<dbReference type="EMDB" id="EMD-44208"/>
<dbReference type="EMDB" id="EMD-44209"/>
<dbReference type="EMDB" id="EMD-44210"/>
<dbReference type="EMDB" id="EMD-44211"/>
<dbReference type="EMDB" id="EMD-44212"/>
<dbReference type="EMDB" id="EMD-44213"/>
<dbReference type="EMDB" id="EMD-44214"/>
<dbReference type="EMDB" id="EMD-44215"/>
<dbReference type="EMDB" id="EMD-44216"/>
<dbReference type="EMDB" id="EMD-44217"/>
<dbReference type="EMDB" id="EMD-44218"/>
<dbReference type="EMDB" id="EMD-44219"/>
<dbReference type="EMDB" id="EMD-44220"/>
<dbReference type="EMDB" id="EMD-44221"/>
<dbReference type="EMDB" id="EMD-44222"/>
<dbReference type="EMDB" id="EMD-44223"/>
<dbReference type="EMDB" id="EMD-44224"/>
<dbReference type="EMDB" id="EMD-44225"/>
<dbReference type="EMDB" id="EMD-44226"/>
<dbReference type="EMDB" id="EMD-44227"/>
<dbReference type="EMDB" id="EMD-44228"/>
<dbReference type="SMR" id="O94609"/>
<dbReference type="BioGRID" id="277267">
    <property type="interactions" value="13"/>
</dbReference>
<dbReference type="DIP" id="DIP-48686N"/>
<dbReference type="FunCoup" id="O94609">
    <property type="interactions" value="906"/>
</dbReference>
<dbReference type="IntAct" id="O94609">
    <property type="interactions" value="1"/>
</dbReference>
<dbReference type="STRING" id="284812.O94609"/>
<dbReference type="iPTMnet" id="O94609"/>
<dbReference type="PaxDb" id="4896-SPBC1604.21c.1"/>
<dbReference type="EnsemblFungi" id="SPBC1604.21c.1">
    <property type="protein sequence ID" value="SPBC1604.21c.1:pep"/>
    <property type="gene ID" value="SPBC1604.21c"/>
</dbReference>
<dbReference type="PomBase" id="SPBC1604.21c">
    <property type="gene designation" value="ptr3"/>
</dbReference>
<dbReference type="VEuPathDB" id="FungiDB:SPBC1604.21c"/>
<dbReference type="eggNOG" id="KOG2012">
    <property type="taxonomic scope" value="Eukaryota"/>
</dbReference>
<dbReference type="HOGENOM" id="CLU_002556_0_0_1"/>
<dbReference type="InParanoid" id="O94609"/>
<dbReference type="OMA" id="GANLHAF"/>
<dbReference type="PhylomeDB" id="O94609"/>
<dbReference type="Reactome" id="R-SPO-8866652">
    <property type="pathway name" value="Synthesis of active ubiquitin: roles of E1 and E2 enzymes"/>
</dbReference>
<dbReference type="Reactome" id="R-SPO-983168">
    <property type="pathway name" value="Antigen processing: Ubiquitination &amp; Proteasome degradation"/>
</dbReference>
<dbReference type="UniPathway" id="UPA00143"/>
<dbReference type="EvolutionaryTrace" id="O94609"/>
<dbReference type="PRO" id="PR:O94609"/>
<dbReference type="Proteomes" id="UP000002485">
    <property type="component" value="Chromosome II"/>
</dbReference>
<dbReference type="GO" id="GO:0005737">
    <property type="term" value="C:cytoplasm"/>
    <property type="evidence" value="ECO:0000314"/>
    <property type="project" value="PomBase"/>
</dbReference>
<dbReference type="GO" id="GO:0005829">
    <property type="term" value="C:cytosol"/>
    <property type="evidence" value="ECO:0007005"/>
    <property type="project" value="PomBase"/>
</dbReference>
<dbReference type="GO" id="GO:0005634">
    <property type="term" value="C:nucleus"/>
    <property type="evidence" value="ECO:0000314"/>
    <property type="project" value="PomBase"/>
</dbReference>
<dbReference type="GO" id="GO:0005524">
    <property type="term" value="F:ATP binding"/>
    <property type="evidence" value="ECO:0000314"/>
    <property type="project" value="PomBase"/>
</dbReference>
<dbReference type="GO" id="GO:0016887">
    <property type="term" value="F:ATP hydrolysis activity"/>
    <property type="evidence" value="ECO:0000305"/>
    <property type="project" value="PomBase"/>
</dbReference>
<dbReference type="GO" id="GO:0000287">
    <property type="term" value="F:magnesium ion binding"/>
    <property type="evidence" value="ECO:0000314"/>
    <property type="project" value="PomBase"/>
</dbReference>
<dbReference type="GO" id="GO:0004839">
    <property type="term" value="F:ubiquitin activating enzyme activity"/>
    <property type="evidence" value="ECO:0000314"/>
    <property type="project" value="PomBase"/>
</dbReference>
<dbReference type="GO" id="GO:0006974">
    <property type="term" value="P:DNA damage response"/>
    <property type="evidence" value="ECO:0000318"/>
    <property type="project" value="GO_Central"/>
</dbReference>
<dbReference type="GO" id="GO:0016567">
    <property type="term" value="P:protein ubiquitination"/>
    <property type="evidence" value="ECO:0000318"/>
    <property type="project" value="GO_Central"/>
</dbReference>
<dbReference type="GO" id="GO:0006511">
    <property type="term" value="P:ubiquitin-dependent protein catabolic process"/>
    <property type="evidence" value="ECO:0000318"/>
    <property type="project" value="GO_Central"/>
</dbReference>
<dbReference type="CDD" id="cd01491">
    <property type="entry name" value="Ube1_repeat1"/>
    <property type="match status" value="1"/>
</dbReference>
<dbReference type="CDD" id="cd01490">
    <property type="entry name" value="Ube1_repeat2"/>
    <property type="match status" value="1"/>
</dbReference>
<dbReference type="FunFam" id="1.10.10.2660:FF:000001">
    <property type="entry name" value="Ubiquitin-activating enzyme E1 1"/>
    <property type="match status" value="1"/>
</dbReference>
<dbReference type="FunFam" id="3.40.50.12550:FF:000001">
    <property type="entry name" value="Ubiquitin-activating enzyme E1 1"/>
    <property type="match status" value="1"/>
</dbReference>
<dbReference type="FunFam" id="3.40.50.720:FF:000015">
    <property type="entry name" value="Ubiquitin-activating enzyme E1 1"/>
    <property type="match status" value="1"/>
</dbReference>
<dbReference type="FunFam" id="3.10.290.60:FF:000002">
    <property type="entry name" value="Ubiquitin-like modifier-activating enzyme 1"/>
    <property type="match status" value="1"/>
</dbReference>
<dbReference type="FunFam" id="2.40.30.180:FF:000001">
    <property type="entry name" value="ubiquitin-like modifier-activating enzyme 1"/>
    <property type="match status" value="1"/>
</dbReference>
<dbReference type="FunFam" id="3.50.50.80:FF:000001">
    <property type="entry name" value="ubiquitin-like modifier-activating enzyme 1"/>
    <property type="match status" value="1"/>
</dbReference>
<dbReference type="Gene3D" id="3.40.50.720">
    <property type="entry name" value="NAD(P)-binding Rossmann-like Domain"/>
    <property type="match status" value="1"/>
</dbReference>
<dbReference type="Gene3D" id="2.40.30.180">
    <property type="entry name" value="Ubiquitin-activating enzyme E1, FCCH domain"/>
    <property type="match status" value="1"/>
</dbReference>
<dbReference type="Gene3D" id="3.50.50.80">
    <property type="entry name" value="Ubiquitin-activating enzyme E1, inactive adenylation domain, subdomain 1"/>
    <property type="match status" value="1"/>
</dbReference>
<dbReference type="Gene3D" id="3.40.50.12550">
    <property type="entry name" value="Ubiquitin-activating enzyme E1, inactive adenylation domain, subdomain 2"/>
    <property type="match status" value="1"/>
</dbReference>
<dbReference type="Gene3D" id="1.10.10.2660">
    <property type="entry name" value="Ubiquitin-activating enzyme E1, SCCH domain"/>
    <property type="match status" value="1"/>
</dbReference>
<dbReference type="Gene3D" id="3.10.290.60">
    <property type="entry name" value="Ubiquitin-activating enzyme E1, UFD domain"/>
    <property type="match status" value="1"/>
</dbReference>
<dbReference type="InterPro" id="IPR032420">
    <property type="entry name" value="E1_4HB"/>
</dbReference>
<dbReference type="InterPro" id="IPR032418">
    <property type="entry name" value="E1_FCCH"/>
</dbReference>
<dbReference type="InterPro" id="IPR042302">
    <property type="entry name" value="E1_FCCH_sf"/>
</dbReference>
<dbReference type="InterPro" id="IPR045886">
    <property type="entry name" value="ThiF/MoeB/HesA"/>
</dbReference>
<dbReference type="InterPro" id="IPR000594">
    <property type="entry name" value="ThiF_NAD_FAD-bd"/>
</dbReference>
<dbReference type="InterPro" id="IPR018965">
    <property type="entry name" value="Ub-activating_enz_E1_C"/>
</dbReference>
<dbReference type="InterPro" id="IPR042449">
    <property type="entry name" value="Ub-E1_IAD_1"/>
</dbReference>
<dbReference type="InterPro" id="IPR038252">
    <property type="entry name" value="UBA_E1_C_sf"/>
</dbReference>
<dbReference type="InterPro" id="IPR019572">
    <property type="entry name" value="UBA_E1_SCCH"/>
</dbReference>
<dbReference type="InterPro" id="IPR042063">
    <property type="entry name" value="Ubi_acti_E1_SCCH"/>
</dbReference>
<dbReference type="InterPro" id="IPR035985">
    <property type="entry name" value="Ubiquitin-activating_enz"/>
</dbReference>
<dbReference type="InterPro" id="IPR018075">
    <property type="entry name" value="UBQ-activ_enz_E1"/>
</dbReference>
<dbReference type="InterPro" id="IPR033127">
    <property type="entry name" value="UBQ-activ_enz_E1_Cys_AS"/>
</dbReference>
<dbReference type="InterPro" id="IPR000011">
    <property type="entry name" value="UBQ/SUMO-activ_enz_E1-like"/>
</dbReference>
<dbReference type="NCBIfam" id="TIGR01408">
    <property type="entry name" value="Ube1"/>
    <property type="match status" value="1"/>
</dbReference>
<dbReference type="PANTHER" id="PTHR10953:SF162">
    <property type="entry name" value="SUMO-ACTIVATING ENZYME SUBUNIT 1"/>
    <property type="match status" value="1"/>
</dbReference>
<dbReference type="PANTHER" id="PTHR10953">
    <property type="entry name" value="UBIQUITIN-ACTIVATING ENZYME E1"/>
    <property type="match status" value="1"/>
</dbReference>
<dbReference type="Pfam" id="PF16191">
    <property type="entry name" value="E1_4HB"/>
    <property type="match status" value="1"/>
</dbReference>
<dbReference type="Pfam" id="PF16190">
    <property type="entry name" value="E1_FCCH"/>
    <property type="match status" value="1"/>
</dbReference>
<dbReference type="Pfam" id="PF09358">
    <property type="entry name" value="E1_UFD"/>
    <property type="match status" value="1"/>
</dbReference>
<dbReference type="Pfam" id="PF00899">
    <property type="entry name" value="ThiF"/>
    <property type="match status" value="2"/>
</dbReference>
<dbReference type="Pfam" id="PF10585">
    <property type="entry name" value="UBA_E1_SCCH"/>
    <property type="match status" value="1"/>
</dbReference>
<dbReference type="PRINTS" id="PR01849">
    <property type="entry name" value="UBIQUITINACT"/>
</dbReference>
<dbReference type="SMART" id="SM00985">
    <property type="entry name" value="UBA_e1_C"/>
    <property type="match status" value="1"/>
</dbReference>
<dbReference type="SUPFAM" id="SSF69572">
    <property type="entry name" value="Activating enzymes of the ubiquitin-like proteins"/>
    <property type="match status" value="2"/>
</dbReference>
<dbReference type="PROSITE" id="PS00865">
    <property type="entry name" value="UBIQUITIN_ACTIVAT_2"/>
    <property type="match status" value="1"/>
</dbReference>